<dbReference type="EMBL" id="AC012561">
    <property type="protein sequence ID" value="AAF87875.1"/>
    <property type="status" value="ALT_SEQ"/>
    <property type="molecule type" value="Genomic_DNA"/>
</dbReference>
<dbReference type="EMBL" id="AC079279">
    <property type="protein sequence ID" value="AAG51190.1"/>
    <property type="status" value="ALT_SEQ"/>
    <property type="molecule type" value="Genomic_DNA"/>
</dbReference>
<dbReference type="EMBL" id="CP002684">
    <property type="protein sequence ID" value="AEE32568.1"/>
    <property type="molecule type" value="Genomic_DNA"/>
</dbReference>
<dbReference type="EMBL" id="AY034929">
    <property type="protein sequence ID" value="AAK59436.2"/>
    <property type="molecule type" value="mRNA"/>
</dbReference>
<dbReference type="EMBL" id="AY039611">
    <property type="protein sequence ID" value="AAK62666.1"/>
    <property type="status" value="ALT_INIT"/>
    <property type="molecule type" value="mRNA"/>
</dbReference>
<dbReference type="EMBL" id="BT000883">
    <property type="protein sequence ID" value="AAN41283.1"/>
    <property type="molecule type" value="mRNA"/>
</dbReference>
<dbReference type="EMBL" id="AF036302">
    <property type="protein sequence ID" value="AAD24405.1"/>
    <property type="molecule type" value="mRNA"/>
</dbReference>
<dbReference type="PIR" id="E96542">
    <property type="entry name" value="E96542"/>
</dbReference>
<dbReference type="PIR" id="T51236">
    <property type="entry name" value="T51236"/>
</dbReference>
<dbReference type="RefSeq" id="NP_001323176.1">
    <property type="nucleotide sequence ID" value="NM_001333446.1"/>
</dbReference>
<dbReference type="RefSeq" id="NP_175475.2">
    <property type="nucleotide sequence ID" value="NM_103942.3"/>
</dbReference>
<dbReference type="SMR" id="Q8H125"/>
<dbReference type="BioGRID" id="26707">
    <property type="interactions" value="5"/>
</dbReference>
<dbReference type="FunCoup" id="Q8H125">
    <property type="interactions" value="67"/>
</dbReference>
<dbReference type="IntAct" id="Q8H125">
    <property type="interactions" value="4"/>
</dbReference>
<dbReference type="STRING" id="3702.Q8H125"/>
<dbReference type="iPTMnet" id="Q8H125"/>
<dbReference type="PaxDb" id="3702-AT1G50600.1"/>
<dbReference type="ProteomicsDB" id="232911"/>
<dbReference type="EnsemblPlants" id="AT1G50600.1">
    <property type="protein sequence ID" value="AT1G50600.1"/>
    <property type="gene ID" value="AT1G50600"/>
</dbReference>
<dbReference type="GeneID" id="841482"/>
<dbReference type="Gramene" id="AT1G50600.1">
    <property type="protein sequence ID" value="AT1G50600.1"/>
    <property type="gene ID" value="AT1G50600"/>
</dbReference>
<dbReference type="KEGG" id="ath:AT1G50600"/>
<dbReference type="Araport" id="AT1G50600"/>
<dbReference type="TAIR" id="AT1G50600">
    <property type="gene designation" value="SCL5"/>
</dbReference>
<dbReference type="eggNOG" id="ENOG502QWDB">
    <property type="taxonomic scope" value="Eukaryota"/>
</dbReference>
<dbReference type="HOGENOM" id="CLU_011924_6_0_1"/>
<dbReference type="InParanoid" id="Q8H125"/>
<dbReference type="PhylomeDB" id="Q8H125"/>
<dbReference type="PRO" id="PR:Q8H125"/>
<dbReference type="Proteomes" id="UP000006548">
    <property type="component" value="Chromosome 1"/>
</dbReference>
<dbReference type="ExpressionAtlas" id="Q8H125">
    <property type="expression patterns" value="baseline and differential"/>
</dbReference>
<dbReference type="GO" id="GO:0005634">
    <property type="term" value="C:nucleus"/>
    <property type="evidence" value="ECO:0007669"/>
    <property type="project" value="UniProtKB-SubCell"/>
</dbReference>
<dbReference type="GO" id="GO:0003700">
    <property type="term" value="F:DNA-binding transcription factor activity"/>
    <property type="evidence" value="ECO:0000250"/>
    <property type="project" value="TAIR"/>
</dbReference>
<dbReference type="GO" id="GO:0006355">
    <property type="term" value="P:regulation of DNA-templated transcription"/>
    <property type="evidence" value="ECO:0000304"/>
    <property type="project" value="TAIR"/>
</dbReference>
<dbReference type="InterPro" id="IPR005202">
    <property type="entry name" value="TF_GRAS"/>
</dbReference>
<dbReference type="PANTHER" id="PTHR31636">
    <property type="entry name" value="OSJNBA0084A10.13 PROTEIN-RELATED"/>
    <property type="match status" value="1"/>
</dbReference>
<dbReference type="Pfam" id="PF03514">
    <property type="entry name" value="GRAS"/>
    <property type="match status" value="1"/>
</dbReference>
<dbReference type="PROSITE" id="PS50985">
    <property type="entry name" value="GRAS"/>
    <property type="match status" value="1"/>
</dbReference>
<accession>Q8H125</accession>
<accession>Q7EXH0</accession>
<accession>Q94BW9</accession>
<accession>Q9LPT0</accession>
<accession>Q9XE53</accession>
<organism>
    <name type="scientific">Arabidopsis thaliana</name>
    <name type="common">Mouse-ear cress</name>
    <dbReference type="NCBI Taxonomy" id="3702"/>
    <lineage>
        <taxon>Eukaryota</taxon>
        <taxon>Viridiplantae</taxon>
        <taxon>Streptophyta</taxon>
        <taxon>Embryophyta</taxon>
        <taxon>Tracheophyta</taxon>
        <taxon>Spermatophyta</taxon>
        <taxon>Magnoliopsida</taxon>
        <taxon>eudicotyledons</taxon>
        <taxon>Gunneridae</taxon>
        <taxon>Pentapetalae</taxon>
        <taxon>rosids</taxon>
        <taxon>malvids</taxon>
        <taxon>Brassicales</taxon>
        <taxon>Brassicaceae</taxon>
        <taxon>Camelineae</taxon>
        <taxon>Arabidopsis</taxon>
    </lineage>
</organism>
<name>SCL5_ARATH</name>
<gene>
    <name type="primary">SCL5</name>
    <name type="ordered locus">At1g50600</name>
    <name type="ORF">F11F12.8</name>
    <name type="ORF">F17J6.12</name>
</gene>
<proteinExistence type="evidence at protein level"/>
<feature type="chain" id="PRO_0000350849" description="Scarecrow-like protein 5">
    <location>
        <begin position="1"/>
        <end position="597"/>
    </location>
</feature>
<feature type="domain" description="GRAS" evidence="2">
    <location>
        <begin position="218"/>
        <end position="597"/>
    </location>
</feature>
<feature type="region of interest" description="Disordered" evidence="3">
    <location>
        <begin position="111"/>
        <end position="172"/>
    </location>
</feature>
<feature type="region of interest" description="Leucine repeat I (LRI)" evidence="2">
    <location>
        <begin position="225"/>
        <end position="285"/>
    </location>
</feature>
<feature type="region of interest" description="VHIID" evidence="2">
    <location>
        <begin position="304"/>
        <end position="369"/>
    </location>
</feature>
<feature type="region of interest" description="Leucine repeat II (LRII)" evidence="2">
    <location>
        <begin position="385"/>
        <end position="417"/>
    </location>
</feature>
<feature type="region of interest" description="PFYRE" evidence="2">
    <location>
        <begin position="426"/>
        <end position="520"/>
    </location>
</feature>
<feature type="region of interest" description="SAW" evidence="2">
    <location>
        <begin position="523"/>
        <end position="597"/>
    </location>
</feature>
<feature type="short sequence motif" description="VHIID" evidence="2">
    <location>
        <begin position="335"/>
        <end position="339"/>
    </location>
</feature>
<feature type="compositionally biased region" description="Low complexity" evidence="3">
    <location>
        <begin position="123"/>
        <end position="169"/>
    </location>
</feature>
<feature type="sequence conflict" description="In Ref. 4; AAD24405." evidence="6" ref="4">
    <original>CKD</original>
    <variation>GTS</variation>
    <location>
        <begin position="292"/>
        <end position="294"/>
    </location>
</feature>
<feature type="sequence conflict" description="In Ref. 3; AAK62666." evidence="6" ref="3">
    <original>K</original>
    <variation>E</variation>
    <location>
        <position position="562"/>
    </location>
</feature>
<reference key="1">
    <citation type="journal article" date="2000" name="Nature">
        <title>Sequence and analysis of chromosome 1 of the plant Arabidopsis thaliana.</title>
        <authorList>
            <person name="Theologis A."/>
            <person name="Ecker J.R."/>
            <person name="Palm C.J."/>
            <person name="Federspiel N.A."/>
            <person name="Kaul S."/>
            <person name="White O."/>
            <person name="Alonso J."/>
            <person name="Altafi H."/>
            <person name="Araujo R."/>
            <person name="Bowman C.L."/>
            <person name="Brooks S.Y."/>
            <person name="Buehler E."/>
            <person name="Chan A."/>
            <person name="Chao Q."/>
            <person name="Chen H."/>
            <person name="Cheuk R.F."/>
            <person name="Chin C.W."/>
            <person name="Chung M.K."/>
            <person name="Conn L."/>
            <person name="Conway A.B."/>
            <person name="Conway A.R."/>
            <person name="Creasy T.H."/>
            <person name="Dewar K."/>
            <person name="Dunn P."/>
            <person name="Etgu P."/>
            <person name="Feldblyum T.V."/>
            <person name="Feng J.-D."/>
            <person name="Fong B."/>
            <person name="Fujii C.Y."/>
            <person name="Gill J.E."/>
            <person name="Goldsmith A.D."/>
            <person name="Haas B."/>
            <person name="Hansen N.F."/>
            <person name="Hughes B."/>
            <person name="Huizar L."/>
            <person name="Hunter J.L."/>
            <person name="Jenkins J."/>
            <person name="Johnson-Hopson C."/>
            <person name="Khan S."/>
            <person name="Khaykin E."/>
            <person name="Kim C.J."/>
            <person name="Koo H.L."/>
            <person name="Kremenetskaia I."/>
            <person name="Kurtz D.B."/>
            <person name="Kwan A."/>
            <person name="Lam B."/>
            <person name="Langin-Hooper S."/>
            <person name="Lee A."/>
            <person name="Lee J.M."/>
            <person name="Lenz C.A."/>
            <person name="Li J.H."/>
            <person name="Li Y.-P."/>
            <person name="Lin X."/>
            <person name="Liu S.X."/>
            <person name="Liu Z.A."/>
            <person name="Luros J.S."/>
            <person name="Maiti R."/>
            <person name="Marziali A."/>
            <person name="Militscher J."/>
            <person name="Miranda M."/>
            <person name="Nguyen M."/>
            <person name="Nierman W.C."/>
            <person name="Osborne B.I."/>
            <person name="Pai G."/>
            <person name="Peterson J."/>
            <person name="Pham P.K."/>
            <person name="Rizzo M."/>
            <person name="Rooney T."/>
            <person name="Rowley D."/>
            <person name="Sakano H."/>
            <person name="Salzberg S.L."/>
            <person name="Schwartz J.R."/>
            <person name="Shinn P."/>
            <person name="Southwick A.M."/>
            <person name="Sun H."/>
            <person name="Tallon L.J."/>
            <person name="Tambunga G."/>
            <person name="Toriumi M.J."/>
            <person name="Town C.D."/>
            <person name="Utterback T."/>
            <person name="Van Aken S."/>
            <person name="Vaysberg M."/>
            <person name="Vysotskaia V.S."/>
            <person name="Walker M."/>
            <person name="Wu D."/>
            <person name="Yu G."/>
            <person name="Fraser C.M."/>
            <person name="Venter J.C."/>
            <person name="Davis R.W."/>
        </authorList>
    </citation>
    <scope>NUCLEOTIDE SEQUENCE [LARGE SCALE GENOMIC DNA]</scope>
    <source>
        <strain>cv. Columbia</strain>
    </source>
</reference>
<reference key="2">
    <citation type="journal article" date="2017" name="Plant J.">
        <title>Araport11: a complete reannotation of the Arabidopsis thaliana reference genome.</title>
        <authorList>
            <person name="Cheng C.Y."/>
            <person name="Krishnakumar V."/>
            <person name="Chan A.P."/>
            <person name="Thibaud-Nissen F."/>
            <person name="Schobel S."/>
            <person name="Town C.D."/>
        </authorList>
    </citation>
    <scope>GENOME REANNOTATION</scope>
    <source>
        <strain>cv. Columbia</strain>
    </source>
</reference>
<reference key="3">
    <citation type="journal article" date="2003" name="Science">
        <title>Empirical analysis of transcriptional activity in the Arabidopsis genome.</title>
        <authorList>
            <person name="Yamada K."/>
            <person name="Lim J."/>
            <person name="Dale J.M."/>
            <person name="Chen H."/>
            <person name="Shinn P."/>
            <person name="Palm C.J."/>
            <person name="Southwick A.M."/>
            <person name="Wu H.C."/>
            <person name="Kim C.J."/>
            <person name="Nguyen M."/>
            <person name="Pham P.K."/>
            <person name="Cheuk R.F."/>
            <person name="Karlin-Newmann G."/>
            <person name="Liu S.X."/>
            <person name="Lam B."/>
            <person name="Sakano H."/>
            <person name="Wu T."/>
            <person name="Yu G."/>
            <person name="Miranda M."/>
            <person name="Quach H.L."/>
            <person name="Tripp M."/>
            <person name="Chang C.H."/>
            <person name="Lee J.M."/>
            <person name="Toriumi M.J."/>
            <person name="Chan M.M."/>
            <person name="Tang C.C."/>
            <person name="Onodera C.S."/>
            <person name="Deng J.M."/>
            <person name="Akiyama K."/>
            <person name="Ansari Y."/>
            <person name="Arakawa T."/>
            <person name="Banh J."/>
            <person name="Banno F."/>
            <person name="Bowser L."/>
            <person name="Brooks S.Y."/>
            <person name="Carninci P."/>
            <person name="Chao Q."/>
            <person name="Choy N."/>
            <person name="Enju A."/>
            <person name="Goldsmith A.D."/>
            <person name="Gurjal M."/>
            <person name="Hansen N.F."/>
            <person name="Hayashizaki Y."/>
            <person name="Johnson-Hopson C."/>
            <person name="Hsuan V.W."/>
            <person name="Iida K."/>
            <person name="Karnes M."/>
            <person name="Khan S."/>
            <person name="Koesema E."/>
            <person name="Ishida J."/>
            <person name="Jiang P.X."/>
            <person name="Jones T."/>
            <person name="Kawai J."/>
            <person name="Kamiya A."/>
            <person name="Meyers C."/>
            <person name="Nakajima M."/>
            <person name="Narusaka M."/>
            <person name="Seki M."/>
            <person name="Sakurai T."/>
            <person name="Satou M."/>
            <person name="Tamse R."/>
            <person name="Vaysberg M."/>
            <person name="Wallender E.K."/>
            <person name="Wong C."/>
            <person name="Yamamura Y."/>
            <person name="Yuan S."/>
            <person name="Shinozaki K."/>
            <person name="Davis R.W."/>
            <person name="Theologis A."/>
            <person name="Ecker J.R."/>
        </authorList>
    </citation>
    <scope>NUCLEOTIDE SEQUENCE [LARGE SCALE MRNA]</scope>
    <source>
        <strain>cv. Columbia</strain>
    </source>
</reference>
<reference key="4">
    <citation type="journal article" date="1999" name="Plant J.">
        <title>The GRAS gene family in Arabidopsis: sequence characterization and basic expression analysis of the SCARECROW-LIKE genes.</title>
        <authorList>
            <person name="Pysh L.D."/>
            <person name="Wysocka-Diller J.W."/>
            <person name="Camilleri C."/>
            <person name="Bouchez D."/>
            <person name="Benfey P.N."/>
        </authorList>
    </citation>
    <scope>NUCLEOTIDE SEQUENCE [MRNA] OF 292-597</scope>
    <scope>TISSUE SPECIFICITY</scope>
</reference>
<reference key="5">
    <citation type="journal article" date="2004" name="Plant Mol. Biol.">
        <title>Genome-wide analysis of the GRAS gene family in rice and Arabidopsis.</title>
        <authorList>
            <person name="Tian C."/>
            <person name="Wan P."/>
            <person name="Sun S."/>
            <person name="Li J."/>
            <person name="Chen M."/>
        </authorList>
    </citation>
    <scope>GENE FAMILY</scope>
</reference>
<reference key="6">
    <citation type="journal article" date="2008" name="Plant Mol. Biol.">
        <title>Large-scale analysis of the GRAS gene family in Arabidopsis thaliana.</title>
        <authorList>
            <person name="Lee M.-H."/>
            <person name="Kim B."/>
            <person name="Song S.-K."/>
            <person name="Heo J.-O."/>
            <person name="Yu N.-I."/>
            <person name="Lee S.A."/>
            <person name="Kim M."/>
            <person name="Kim D.G."/>
            <person name="Sohn S.O."/>
            <person name="Lim C.E."/>
            <person name="Chang K.S."/>
            <person name="Lee M.M."/>
            <person name="Lim J."/>
        </authorList>
    </citation>
    <scope>GENE FAMILY</scope>
    <scope>TISSUE SPECIFICITY</scope>
</reference>
<comment type="function">
    <text evidence="1">Probable transcription factor involved in plant development.</text>
</comment>
<comment type="interaction">
    <interactant intactId="EBI-15395779">
        <id>Q8H125</id>
    </interactant>
    <interactant intactId="EBI-25515179">
        <id>Q9SK67</id>
        <label>ERF120</label>
    </interactant>
    <organismsDiffer>false</organismsDiffer>
    <experiments>3</experiments>
</comment>
<comment type="interaction">
    <interactant intactId="EBI-15395779">
        <id>Q8H125</id>
    </interactant>
    <interactant intactId="EBI-25514205">
        <id>Q38Q40</id>
        <label>ERF122</label>
    </interactant>
    <organismsDiffer>false</organismsDiffer>
    <experiments>3</experiments>
</comment>
<comment type="interaction">
    <interactant intactId="EBI-15395779">
        <id>Q8H125</id>
    </interactant>
    <interactant intactId="EBI-15192297">
        <id>Q9LQF0</id>
        <label>TCP23</label>
    </interactant>
    <organismsDiffer>false</organismsDiffer>
    <experiments>3</experiments>
</comment>
<comment type="subcellular location">
    <subcellularLocation>
        <location evidence="6">Nucleus</location>
    </subcellularLocation>
</comment>
<comment type="tissue specificity">
    <text evidence="4 5">Expressed in seedlings, roots, shoots, leaves, flowers and siliques.</text>
</comment>
<comment type="similarity">
    <text evidence="6">Belongs to the GRAS family.</text>
</comment>
<comment type="sequence caution" evidence="6">
    <conflict type="erroneous gene model prediction">
        <sequence resource="EMBL-CDS" id="AAF87875"/>
    </conflict>
</comment>
<comment type="sequence caution" evidence="6">
    <conflict type="erroneous gene model prediction">
        <sequence resource="EMBL-CDS" id="AAG51190"/>
    </conflict>
</comment>
<comment type="sequence caution" evidence="6">
    <conflict type="erroneous initiation">
        <sequence resource="EMBL-CDS" id="AAK62666"/>
    </conflict>
</comment>
<protein>
    <recommendedName>
        <fullName>Scarecrow-like protein 5</fullName>
        <shortName>AtSCL5</shortName>
    </recommendedName>
    <alternativeName>
        <fullName>GRAS family protein 6</fullName>
        <shortName>AtGRAS-6</shortName>
    </alternativeName>
</protein>
<keyword id="KW-0539">Nucleus</keyword>
<keyword id="KW-1185">Reference proteome</keyword>
<keyword id="KW-0804">Transcription</keyword>
<keyword id="KW-0805">Transcription regulation</keyword>
<evidence type="ECO:0000250" key="1"/>
<evidence type="ECO:0000255" key="2">
    <source>
        <dbReference type="PROSITE-ProRule" id="PRU01191"/>
    </source>
</evidence>
<evidence type="ECO:0000256" key="3">
    <source>
        <dbReference type="SAM" id="MobiDB-lite"/>
    </source>
</evidence>
<evidence type="ECO:0000269" key="4">
    <source>
    </source>
</evidence>
<evidence type="ECO:0000269" key="5">
    <source>
    </source>
</evidence>
<evidence type="ECO:0000305" key="6"/>
<sequence length="597" mass="66641">MRLSVFIIPLVESRQASGIINKQSTSLLIRFSLYLEASISTKSFFSKSQRISQTQSPICLSANYYQPDNLDMEATQKHMIQEGSSMFYHQPSSVKQMDLSVQTFDSYCTLESSSGTKSHPCLNNKNNSSSTTSFSSNESPISQANNNNLSRFNNHSPEENNNSPLSGSSATNTNETELSLMLKDLETAMMEPDVDNSYNNQGGFGQQHGVVSSAMYRSMEMISRGDLKGVLYECAKAVENYDLEMTDWLISQLQQMVSVSGEPVQRLGAYMLEGLVARLASSGSSIYKALRCKDPTGPELLTYMHILYEACPYFKFGYESANGAIAEAVKNESFVHIIDFQISQGGQWVSLIRALGARPGGPPNVRITGIDDPRSSFARQGGLELVGQRLGKLAEMCGVPFEFHGAALCCTEVEIEKLGVRNGEALAVNFPLVLHHMPDESVTVENHRDRLLRLVKHLSPNVVTLVEQEANTNTAPFLPRFVETMNHYLAVFESIDVKLARDHKERINVEQHCLAREVVNLIACEGVEREERHEPLGKWRSRFHMAGFKPYPLSSYVNATIKGLLESYSEKYTLEERDGALYLGWKNQPLITSCAWR</sequence>